<comment type="function">
    <text evidence="2">May be important in developing and maintaining corneal transparency and for the structure of the stromal matrix.</text>
</comment>
<comment type="subcellular location">
    <subcellularLocation>
        <location evidence="9">Secreted</location>
        <location evidence="9">Extracellular space</location>
        <location evidence="9">Extracellular matrix</location>
    </subcellularLocation>
</comment>
<comment type="tissue specificity">
    <text evidence="6">Expressed in eye, where it is found in the corneal epithelial layer and to a lesser extent in the stromal layer (at protein level).</text>
</comment>
<comment type="developmental stage">
    <text evidence="6">At 2-3 days post-fertilization, detected in eye, forebrain, midbrain, hindbrain and anterior spinal cord.</text>
</comment>
<comment type="PTM">
    <text evidence="6">Glycosylated. Contains keratan sulfate chains.</text>
</comment>
<comment type="disruption phenotype">
    <text evidence="6">Morpolino knockdown of the protein results in increased apoptosis in eye, forebrain and midbrain, and reduced survival rate in embryos.</text>
</comment>
<comment type="similarity">
    <text evidence="8">Belongs to the small leucine-rich proteoglycan (SLRP) family. SLRP class II subfamily.</text>
</comment>
<name>KERA_DANRE</name>
<feature type="signal peptide" evidence="4">
    <location>
        <begin position="1"/>
        <end position="26"/>
    </location>
</feature>
<feature type="chain" id="PRO_5010844546" description="Keratocan">
    <location>
        <begin position="27"/>
        <end position="348"/>
    </location>
</feature>
<feature type="domain" description="LRRNT" evidence="4">
    <location>
        <begin position="40"/>
        <end position="69"/>
    </location>
</feature>
<feature type="repeat" description="LRR 1" evidence="4">
    <location>
        <begin position="70"/>
        <end position="92"/>
    </location>
</feature>
<feature type="repeat" description="LRR 2" evidence="4">
    <location>
        <begin position="93"/>
        <end position="118"/>
    </location>
</feature>
<feature type="repeat" description="LRR 3" evidence="4">
    <location>
        <begin position="119"/>
        <end position="140"/>
    </location>
</feature>
<feature type="repeat" description="LRR 4" evidence="4">
    <location>
        <begin position="141"/>
        <end position="163"/>
    </location>
</feature>
<feature type="repeat" description="LRR 5" evidence="4">
    <location>
        <begin position="165"/>
        <end position="189"/>
    </location>
</feature>
<feature type="repeat" description="LRR 6" evidence="4">
    <location>
        <begin position="190"/>
        <end position="213"/>
    </location>
</feature>
<feature type="repeat" description="LRR 7" evidence="4">
    <location>
        <begin position="215"/>
        <end position="234"/>
    </location>
</feature>
<feature type="repeat" description="LRR 8" evidence="4">
    <location>
        <begin position="235"/>
        <end position="260"/>
    </location>
</feature>
<feature type="repeat" description="LRR 9" evidence="4">
    <location>
        <begin position="262"/>
        <end position="280"/>
    </location>
</feature>
<feature type="repeat" description="LRR 10" evidence="4">
    <location>
        <begin position="281"/>
        <end position="303"/>
    </location>
</feature>
<feature type="glycosylation site" description="N-linked (GlcNAc...) (keratan sulfate) asparagine" evidence="1">
    <location>
        <position position="92"/>
    </location>
</feature>
<feature type="glycosylation site" description="N-linked (GlcNAc...) (keratan sulfate) asparagine" evidence="1">
    <location>
        <position position="259"/>
    </location>
</feature>
<feature type="glycosylation site" description="N-linked (GlcNAc...) asparagine" evidence="5">
    <location>
        <position position="297"/>
    </location>
</feature>
<feature type="disulfide bond" evidence="3">
    <location>
        <begin position="41"/>
        <end position="47"/>
    </location>
</feature>
<feature type="disulfide bond" evidence="3">
    <location>
        <begin position="45"/>
        <end position="57"/>
    </location>
</feature>
<feature type="disulfide bond" evidence="3">
    <location>
        <begin position="302"/>
        <end position="339"/>
    </location>
</feature>
<evidence type="ECO:0000250" key="1">
    <source>
        <dbReference type="UniProtKB" id="O42235"/>
    </source>
</evidence>
<evidence type="ECO:0000250" key="2">
    <source>
        <dbReference type="UniProtKB" id="O60938"/>
    </source>
</evidence>
<evidence type="ECO:0000250" key="3">
    <source>
        <dbReference type="UniProtKB" id="P21793"/>
    </source>
</evidence>
<evidence type="ECO:0000255" key="4"/>
<evidence type="ECO:0000255" key="5">
    <source>
        <dbReference type="PROSITE-ProRule" id="PRU00498"/>
    </source>
</evidence>
<evidence type="ECO:0000269" key="6">
    <source>
    </source>
</evidence>
<evidence type="ECO:0000303" key="7">
    <source>
    </source>
</evidence>
<evidence type="ECO:0000305" key="8"/>
<evidence type="ECO:0000305" key="9">
    <source>
    </source>
</evidence>
<evidence type="ECO:0000312" key="10">
    <source>
        <dbReference type="EMBL" id="AAI15059.1"/>
    </source>
</evidence>
<evidence type="ECO:0000312" key="11">
    <source>
        <dbReference type="EMBL" id="ABG72686.1"/>
    </source>
</evidence>
<evidence type="ECO:0000312" key="12">
    <source>
        <dbReference type="Proteomes" id="UP000000437"/>
    </source>
</evidence>
<gene>
    <name evidence="7" type="primary">kera</name>
</gene>
<keyword id="KW-1015">Disulfide bond</keyword>
<keyword id="KW-0272">Extracellular matrix</keyword>
<keyword id="KW-0325">Glycoprotein</keyword>
<keyword id="KW-0433">Leucine-rich repeat</keyword>
<keyword id="KW-1185">Reference proteome</keyword>
<keyword id="KW-0677">Repeat</keyword>
<keyword id="KW-0964">Secreted</keyword>
<keyword id="KW-0716">Sensory transduction</keyword>
<keyword id="KW-0732">Signal</keyword>
<keyword id="KW-0844">Vision</keyword>
<sequence length="348" mass="38938">MSRLNLTMEVLLVAFVAVFLTSQVHSDEIPYEHLMSQLQACPKECNCPPNFPNAVYCDNKGLKSIPVIPPYTWYLYLQNNLIDVLSANALRNATQLKWINLNRNKITTEGLEVDALRAMSNLVHLYMEDNLLSSIPSPLPAKLEQLRLSRNKISKIPPGVFSGMGHLTLLDLQSNKLQDDAVTEVSLKGLNNLIQINLAKNQLNSMPLGLPPTTTQIFLDGNNIEKIPAEYFKGLPKVASLRLNRNKLANGGIPKNVFNLSSILDLQLSHNQLTEVPVISSGLEHLHLDHNKIKSVNSSDICPPGVLDDHLEEKSPRLRYLRLDGNEIQPPIPRELMTCFRLLRAVVI</sequence>
<protein>
    <recommendedName>
        <fullName evidence="7">Keratocan</fullName>
    </recommendedName>
</protein>
<organism evidence="12">
    <name type="scientific">Danio rerio</name>
    <name type="common">Zebrafish</name>
    <name type="synonym">Brachydanio rerio</name>
    <dbReference type="NCBI Taxonomy" id="7955"/>
    <lineage>
        <taxon>Eukaryota</taxon>
        <taxon>Metazoa</taxon>
        <taxon>Chordata</taxon>
        <taxon>Craniata</taxon>
        <taxon>Vertebrata</taxon>
        <taxon>Euteleostomi</taxon>
        <taxon>Actinopterygii</taxon>
        <taxon>Neopterygii</taxon>
        <taxon>Teleostei</taxon>
        <taxon>Ostariophysi</taxon>
        <taxon>Cypriniformes</taxon>
        <taxon>Danionidae</taxon>
        <taxon>Danioninae</taxon>
        <taxon>Danio</taxon>
    </lineage>
</organism>
<proteinExistence type="evidence at protein level"/>
<reference evidence="12" key="1">
    <citation type="journal article" date="2013" name="Nature">
        <title>The zebrafish reference genome sequence and its relationship to the human genome.</title>
        <authorList>
            <person name="Howe K."/>
            <person name="Clark M.D."/>
            <person name="Torroja C.F."/>
            <person name="Torrance J."/>
            <person name="Berthelot C."/>
            <person name="Muffato M."/>
            <person name="Collins J.E."/>
            <person name="Humphray S."/>
            <person name="McLaren K."/>
            <person name="Matthews L."/>
            <person name="McLaren S."/>
            <person name="Sealy I."/>
            <person name="Caccamo M."/>
            <person name="Churcher C."/>
            <person name="Scott C."/>
            <person name="Barrett J.C."/>
            <person name="Koch R."/>
            <person name="Rauch G.J."/>
            <person name="White S."/>
            <person name="Chow W."/>
            <person name="Kilian B."/>
            <person name="Quintais L.T."/>
            <person name="Guerra-Assuncao J.A."/>
            <person name="Zhou Y."/>
            <person name="Gu Y."/>
            <person name="Yen J."/>
            <person name="Vogel J.H."/>
            <person name="Eyre T."/>
            <person name="Redmond S."/>
            <person name="Banerjee R."/>
            <person name="Chi J."/>
            <person name="Fu B."/>
            <person name="Langley E."/>
            <person name="Maguire S.F."/>
            <person name="Laird G.K."/>
            <person name="Lloyd D."/>
            <person name="Kenyon E."/>
            <person name="Donaldson S."/>
            <person name="Sehra H."/>
            <person name="Almeida-King J."/>
            <person name="Loveland J."/>
            <person name="Trevanion S."/>
            <person name="Jones M."/>
            <person name="Quail M."/>
            <person name="Willey D."/>
            <person name="Hunt A."/>
            <person name="Burton J."/>
            <person name="Sims S."/>
            <person name="McLay K."/>
            <person name="Plumb B."/>
            <person name="Davis J."/>
            <person name="Clee C."/>
            <person name="Oliver K."/>
            <person name="Clark R."/>
            <person name="Riddle C."/>
            <person name="Elliot D."/>
            <person name="Threadgold G."/>
            <person name="Harden G."/>
            <person name="Ware D."/>
            <person name="Begum S."/>
            <person name="Mortimore B."/>
            <person name="Kerry G."/>
            <person name="Heath P."/>
            <person name="Phillimore B."/>
            <person name="Tracey A."/>
            <person name="Corby N."/>
            <person name="Dunn M."/>
            <person name="Johnson C."/>
            <person name="Wood J."/>
            <person name="Clark S."/>
            <person name="Pelan S."/>
            <person name="Griffiths G."/>
            <person name="Smith M."/>
            <person name="Glithero R."/>
            <person name="Howden P."/>
            <person name="Barker N."/>
            <person name="Lloyd C."/>
            <person name="Stevens C."/>
            <person name="Harley J."/>
            <person name="Holt K."/>
            <person name="Panagiotidis G."/>
            <person name="Lovell J."/>
            <person name="Beasley H."/>
            <person name="Henderson C."/>
            <person name="Gordon D."/>
            <person name="Auger K."/>
            <person name="Wright D."/>
            <person name="Collins J."/>
            <person name="Raisen C."/>
            <person name="Dyer L."/>
            <person name="Leung K."/>
            <person name="Robertson L."/>
            <person name="Ambridge K."/>
            <person name="Leongamornlert D."/>
            <person name="McGuire S."/>
            <person name="Gilderthorp R."/>
            <person name="Griffiths C."/>
            <person name="Manthravadi D."/>
            <person name="Nichol S."/>
            <person name="Barker G."/>
            <person name="Whitehead S."/>
            <person name="Kay M."/>
            <person name="Brown J."/>
            <person name="Murnane C."/>
            <person name="Gray E."/>
            <person name="Humphries M."/>
            <person name="Sycamore N."/>
            <person name="Barker D."/>
            <person name="Saunders D."/>
            <person name="Wallis J."/>
            <person name="Babbage A."/>
            <person name="Hammond S."/>
            <person name="Mashreghi-Mohammadi M."/>
            <person name="Barr L."/>
            <person name="Martin S."/>
            <person name="Wray P."/>
            <person name="Ellington A."/>
            <person name="Matthews N."/>
            <person name="Ellwood M."/>
            <person name="Woodmansey R."/>
            <person name="Clark G."/>
            <person name="Cooper J."/>
            <person name="Tromans A."/>
            <person name="Grafham D."/>
            <person name="Skuce C."/>
            <person name="Pandian R."/>
            <person name="Andrews R."/>
            <person name="Harrison E."/>
            <person name="Kimberley A."/>
            <person name="Garnett J."/>
            <person name="Fosker N."/>
            <person name="Hall R."/>
            <person name="Garner P."/>
            <person name="Kelly D."/>
            <person name="Bird C."/>
            <person name="Palmer S."/>
            <person name="Gehring I."/>
            <person name="Berger A."/>
            <person name="Dooley C.M."/>
            <person name="Ersan-Urun Z."/>
            <person name="Eser C."/>
            <person name="Geiger H."/>
            <person name="Geisler M."/>
            <person name="Karotki L."/>
            <person name="Kirn A."/>
            <person name="Konantz J."/>
            <person name="Konantz M."/>
            <person name="Oberlander M."/>
            <person name="Rudolph-Geiger S."/>
            <person name="Teucke M."/>
            <person name="Lanz C."/>
            <person name="Raddatz G."/>
            <person name="Osoegawa K."/>
            <person name="Zhu B."/>
            <person name="Rapp A."/>
            <person name="Widaa S."/>
            <person name="Langford C."/>
            <person name="Yang F."/>
            <person name="Schuster S.C."/>
            <person name="Carter N.P."/>
            <person name="Harrow J."/>
            <person name="Ning Z."/>
            <person name="Herrero J."/>
            <person name="Searle S.M."/>
            <person name="Enright A."/>
            <person name="Geisler R."/>
            <person name="Plasterk R.H."/>
            <person name="Lee C."/>
            <person name="Westerfield M."/>
            <person name="de Jong P.J."/>
            <person name="Zon L.I."/>
            <person name="Postlethwait J.H."/>
            <person name="Nusslein-Volhard C."/>
            <person name="Hubbard T.J."/>
            <person name="Roest Crollius H."/>
            <person name="Rogers J."/>
            <person name="Stemple D.L."/>
        </authorList>
    </citation>
    <scope>NUCLEOTIDE SEQUENCE [LARGE SCALE GENOMIC DNA]</scope>
    <source>
        <strain>Tuebingen</strain>
    </source>
</reference>
<reference evidence="10" key="2">
    <citation type="submission" date="2006-04" db="EMBL/GenBank/DDBJ databases">
        <authorList>
            <consortium name="NIH - Zebrafish Gene Collection (ZGC) project"/>
        </authorList>
    </citation>
    <scope>NUCLEOTIDE SEQUENCE [LARGE SCALE MRNA]</scope>
    <source>
        <tissue>Eye</tissue>
    </source>
</reference>
<reference evidence="11" key="3">
    <citation type="journal article" date="2008" name="J. Biol. Chem.">
        <title>Molecular analysis and characterization of zebrafish keratocan (zKera) gene.</title>
        <authorList>
            <person name="Yeh L.K."/>
            <person name="Liu C.Y."/>
            <person name="Chien C.L."/>
            <person name="Converse R.L."/>
            <person name="Kao W.W."/>
            <person name="Chen M.S."/>
            <person name="Hu F.R."/>
            <person name="Hsieh F.J."/>
            <person name="Wang I.J."/>
        </authorList>
    </citation>
    <scope>NUCLEOTIDE SEQUENCE [GENOMIC DNA] OF 3-348</scope>
    <scope>SUBCELLULAR LOCATION</scope>
    <scope>TISSUE SPECIFICITY</scope>
    <scope>DEVELOPMENTAL STAGE</scope>
    <scope>GLYCOSYLATION</scope>
    <scope>DISRUPTION PHENOTYPE</scope>
</reference>
<accession>Q5RI43</accession>
<accession>Q0PZF1</accession>
<dbReference type="EMBL" id="BX322608">
    <property type="status" value="NOT_ANNOTATED_CDS"/>
    <property type="molecule type" value="Genomic_DNA"/>
</dbReference>
<dbReference type="EMBL" id="BC115058">
    <property type="protein sequence ID" value="AAI15059.1"/>
    <property type="molecule type" value="mRNA"/>
</dbReference>
<dbReference type="EMBL" id="DQ667686">
    <property type="protein sequence ID" value="ABG72686.1"/>
    <property type="molecule type" value="Genomic_DNA"/>
</dbReference>
<dbReference type="RefSeq" id="NP_001020719.1">
    <property type="nucleotide sequence ID" value="NM_001025548.2"/>
</dbReference>
<dbReference type="RefSeq" id="XP_005164822.1">
    <property type="nucleotide sequence ID" value="XM_005164765.2"/>
</dbReference>
<dbReference type="SMR" id="Q5RI43"/>
<dbReference type="FunCoup" id="Q5RI43">
    <property type="interactions" value="255"/>
</dbReference>
<dbReference type="STRING" id="7955.ENSDARP00000073976"/>
<dbReference type="GlyCosmos" id="Q5RI43">
    <property type="glycosylation" value="3 sites, No reported glycans"/>
</dbReference>
<dbReference type="PaxDb" id="7955-ENSDARP00000073976"/>
<dbReference type="Ensembl" id="ENSDART00000079521">
    <property type="protein sequence ID" value="ENSDARP00000073976"/>
    <property type="gene ID" value="ENSDARG00000056938"/>
</dbReference>
<dbReference type="GeneID" id="567017"/>
<dbReference type="KEGG" id="dre:567017"/>
<dbReference type="AGR" id="ZFIN:ZDB-GENE-041210-165"/>
<dbReference type="CTD" id="11081"/>
<dbReference type="ZFIN" id="ZDB-GENE-041210-165">
    <property type="gene designation" value="kera"/>
</dbReference>
<dbReference type="eggNOG" id="KOG0619">
    <property type="taxonomic scope" value="Eukaryota"/>
</dbReference>
<dbReference type="HOGENOM" id="CLU_000288_186_4_1"/>
<dbReference type="InParanoid" id="Q5RI43"/>
<dbReference type="OMA" id="MECFCPP"/>
<dbReference type="OrthoDB" id="5789657at2759"/>
<dbReference type="PhylomeDB" id="Q5RI43"/>
<dbReference type="TreeFam" id="TF334562"/>
<dbReference type="Reactome" id="R-DRE-2022854">
    <property type="pathway name" value="Keratan sulfate biosynthesis"/>
</dbReference>
<dbReference type="Reactome" id="R-DRE-2022857">
    <property type="pathway name" value="Keratan sulfate degradation"/>
</dbReference>
<dbReference type="PRO" id="PR:Q5RI43"/>
<dbReference type="Proteomes" id="UP000000437">
    <property type="component" value="Chromosome 4"/>
</dbReference>
<dbReference type="Bgee" id="ENSDARG00000056938">
    <property type="expression patterns" value="Expressed in head and 19 other cell types or tissues"/>
</dbReference>
<dbReference type="ExpressionAtlas" id="Q5RI43">
    <property type="expression patterns" value="baseline and differential"/>
</dbReference>
<dbReference type="GO" id="GO:0005615">
    <property type="term" value="C:extracellular space"/>
    <property type="evidence" value="ECO:0000318"/>
    <property type="project" value="GO_Central"/>
</dbReference>
<dbReference type="GO" id="GO:0007601">
    <property type="term" value="P:visual perception"/>
    <property type="evidence" value="ECO:0007669"/>
    <property type="project" value="UniProtKB-KW"/>
</dbReference>
<dbReference type="Gene3D" id="3.80.10.10">
    <property type="entry name" value="Ribonuclease Inhibitor"/>
    <property type="match status" value="2"/>
</dbReference>
<dbReference type="InterPro" id="IPR001611">
    <property type="entry name" value="Leu-rich_rpt"/>
</dbReference>
<dbReference type="InterPro" id="IPR003591">
    <property type="entry name" value="Leu-rich_rpt_typical-subtyp"/>
</dbReference>
<dbReference type="InterPro" id="IPR032675">
    <property type="entry name" value="LRR_dom_sf"/>
</dbReference>
<dbReference type="InterPro" id="IPR000372">
    <property type="entry name" value="LRRNT"/>
</dbReference>
<dbReference type="InterPro" id="IPR050333">
    <property type="entry name" value="SLRP"/>
</dbReference>
<dbReference type="PANTHER" id="PTHR45712">
    <property type="entry name" value="AGAP008170-PA"/>
    <property type="match status" value="1"/>
</dbReference>
<dbReference type="PANTHER" id="PTHR45712:SF13">
    <property type="entry name" value="KERATOCAN"/>
    <property type="match status" value="1"/>
</dbReference>
<dbReference type="Pfam" id="PF13855">
    <property type="entry name" value="LRR_8"/>
    <property type="match status" value="3"/>
</dbReference>
<dbReference type="Pfam" id="PF01462">
    <property type="entry name" value="LRRNT"/>
    <property type="match status" value="1"/>
</dbReference>
<dbReference type="SMART" id="SM00369">
    <property type="entry name" value="LRR_TYP"/>
    <property type="match status" value="5"/>
</dbReference>
<dbReference type="SMART" id="SM00013">
    <property type="entry name" value="LRRNT"/>
    <property type="match status" value="1"/>
</dbReference>
<dbReference type="SUPFAM" id="SSF52058">
    <property type="entry name" value="L domain-like"/>
    <property type="match status" value="1"/>
</dbReference>
<dbReference type="PROSITE" id="PS51450">
    <property type="entry name" value="LRR"/>
    <property type="match status" value="8"/>
</dbReference>